<accession>A5VTA9</accession>
<gene>
    <name evidence="1" type="primary">rimP</name>
    <name type="ordered locus">BOV_2074</name>
</gene>
<dbReference type="EMBL" id="CP000708">
    <property type="protein sequence ID" value="ABQ61801.1"/>
    <property type="molecule type" value="Genomic_DNA"/>
</dbReference>
<dbReference type="RefSeq" id="WP_002965224.1">
    <property type="nucleotide sequence ID" value="NC_009505.1"/>
</dbReference>
<dbReference type="SMR" id="A5VTA9"/>
<dbReference type="GeneID" id="97534585"/>
<dbReference type="KEGG" id="bov:BOV_2074"/>
<dbReference type="HOGENOM" id="CLU_070525_0_1_5"/>
<dbReference type="PhylomeDB" id="A5VTA9"/>
<dbReference type="Proteomes" id="UP000006383">
    <property type="component" value="Chromosome I"/>
</dbReference>
<dbReference type="GO" id="GO:0005829">
    <property type="term" value="C:cytosol"/>
    <property type="evidence" value="ECO:0007669"/>
    <property type="project" value="TreeGrafter"/>
</dbReference>
<dbReference type="GO" id="GO:0000028">
    <property type="term" value="P:ribosomal small subunit assembly"/>
    <property type="evidence" value="ECO:0007669"/>
    <property type="project" value="TreeGrafter"/>
</dbReference>
<dbReference type="GO" id="GO:0006412">
    <property type="term" value="P:translation"/>
    <property type="evidence" value="ECO:0007669"/>
    <property type="project" value="TreeGrafter"/>
</dbReference>
<dbReference type="CDD" id="cd01734">
    <property type="entry name" value="YlxS_C"/>
    <property type="match status" value="1"/>
</dbReference>
<dbReference type="Gene3D" id="3.30.300.70">
    <property type="entry name" value="RimP-like superfamily, N-terminal"/>
    <property type="match status" value="1"/>
</dbReference>
<dbReference type="HAMAP" id="MF_01077">
    <property type="entry name" value="RimP"/>
    <property type="match status" value="1"/>
</dbReference>
<dbReference type="InterPro" id="IPR003728">
    <property type="entry name" value="Ribosome_maturation_RimP"/>
</dbReference>
<dbReference type="InterPro" id="IPR028998">
    <property type="entry name" value="RimP_C"/>
</dbReference>
<dbReference type="InterPro" id="IPR036847">
    <property type="entry name" value="RimP_C_sf"/>
</dbReference>
<dbReference type="InterPro" id="IPR028989">
    <property type="entry name" value="RimP_N"/>
</dbReference>
<dbReference type="InterPro" id="IPR035956">
    <property type="entry name" value="RimP_N_sf"/>
</dbReference>
<dbReference type="NCBIfam" id="NF000932">
    <property type="entry name" value="PRK00092.2-5"/>
    <property type="match status" value="1"/>
</dbReference>
<dbReference type="PANTHER" id="PTHR33867">
    <property type="entry name" value="RIBOSOME MATURATION FACTOR RIMP"/>
    <property type="match status" value="1"/>
</dbReference>
<dbReference type="PANTHER" id="PTHR33867:SF1">
    <property type="entry name" value="RIBOSOME MATURATION FACTOR RIMP"/>
    <property type="match status" value="1"/>
</dbReference>
<dbReference type="Pfam" id="PF17384">
    <property type="entry name" value="DUF150_C"/>
    <property type="match status" value="1"/>
</dbReference>
<dbReference type="Pfam" id="PF02576">
    <property type="entry name" value="RimP_N"/>
    <property type="match status" value="1"/>
</dbReference>
<dbReference type="SUPFAM" id="SSF74942">
    <property type="entry name" value="YhbC-like, C-terminal domain"/>
    <property type="match status" value="1"/>
</dbReference>
<dbReference type="SUPFAM" id="SSF75420">
    <property type="entry name" value="YhbC-like, N-terminal domain"/>
    <property type="match status" value="1"/>
</dbReference>
<feature type="chain" id="PRO_1000064687" description="Ribosome maturation factor RimP">
    <location>
        <begin position="1"/>
        <end position="219"/>
    </location>
</feature>
<feature type="region of interest" description="Disordered" evidence="2">
    <location>
        <begin position="195"/>
        <end position="219"/>
    </location>
</feature>
<comment type="function">
    <text evidence="1">Required for maturation of 30S ribosomal subunits.</text>
</comment>
<comment type="subcellular location">
    <subcellularLocation>
        <location evidence="1">Cytoplasm</location>
    </subcellularLocation>
</comment>
<comment type="similarity">
    <text evidence="1">Belongs to the RimP family.</text>
</comment>
<sequence length="219" mass="24039">MTEQVQANETETPVAVADERIIRETGIDAKVAGIVEPVINTLGFRLVRVRLSGLNGQTLQIMAERPDGTMTVDDCELVSRTVAPVLDVEDPISGKYHLEISSPGIDRPLVRKSDFSDWAGHIAKVETSIVHEGRKKFRGRIVVGEADSVTIESDQISYGNEPVVRIPFDLISDARLVLTDDLIRDALRKDKALREGRIPGDDLGAEPEDAASTETQEKK</sequence>
<evidence type="ECO:0000255" key="1">
    <source>
        <dbReference type="HAMAP-Rule" id="MF_01077"/>
    </source>
</evidence>
<evidence type="ECO:0000256" key="2">
    <source>
        <dbReference type="SAM" id="MobiDB-lite"/>
    </source>
</evidence>
<reference key="1">
    <citation type="journal article" date="2009" name="PLoS ONE">
        <title>Genome degradation in Brucella ovis corresponds with narrowing of its host range and tissue tropism.</title>
        <authorList>
            <person name="Tsolis R.M."/>
            <person name="Seshadri R."/>
            <person name="Santos R.L."/>
            <person name="Sangari F.J."/>
            <person name="Lobo J.M."/>
            <person name="de Jong M.F."/>
            <person name="Ren Q."/>
            <person name="Myers G."/>
            <person name="Brinkac L.M."/>
            <person name="Nelson W.C."/>
            <person name="Deboy R.T."/>
            <person name="Angiuoli S."/>
            <person name="Khouri H."/>
            <person name="Dimitrov G."/>
            <person name="Robinson J.R."/>
            <person name="Mulligan S."/>
            <person name="Walker R.L."/>
            <person name="Elzer P.E."/>
            <person name="Hassan K.A."/>
            <person name="Paulsen I.T."/>
        </authorList>
    </citation>
    <scope>NUCLEOTIDE SEQUENCE [LARGE SCALE GENOMIC DNA]</scope>
    <source>
        <strain>ATCC 25840 / 63/290 / NCTC 10512</strain>
    </source>
</reference>
<proteinExistence type="inferred from homology"/>
<name>RIMP_BRUO2</name>
<organism>
    <name type="scientific">Brucella ovis (strain ATCC 25840 / 63/290 / NCTC 10512)</name>
    <dbReference type="NCBI Taxonomy" id="444178"/>
    <lineage>
        <taxon>Bacteria</taxon>
        <taxon>Pseudomonadati</taxon>
        <taxon>Pseudomonadota</taxon>
        <taxon>Alphaproteobacteria</taxon>
        <taxon>Hyphomicrobiales</taxon>
        <taxon>Brucellaceae</taxon>
        <taxon>Brucella/Ochrobactrum group</taxon>
        <taxon>Brucella</taxon>
    </lineage>
</organism>
<protein>
    <recommendedName>
        <fullName evidence="1">Ribosome maturation factor RimP</fullName>
    </recommendedName>
</protein>
<keyword id="KW-0963">Cytoplasm</keyword>
<keyword id="KW-0690">Ribosome biogenesis</keyword>